<dbReference type="EMBL" id="CP000768">
    <property type="protein sequence ID" value="ABS43506.1"/>
    <property type="molecule type" value="Genomic_DNA"/>
</dbReference>
<dbReference type="SMR" id="A7H585"/>
<dbReference type="KEGG" id="cjd:JJD26997_1684"/>
<dbReference type="HOGENOM" id="CLU_101379_2_0_7"/>
<dbReference type="Proteomes" id="UP000002302">
    <property type="component" value="Chromosome"/>
</dbReference>
<dbReference type="GO" id="GO:0003677">
    <property type="term" value="F:DNA binding"/>
    <property type="evidence" value="ECO:0007669"/>
    <property type="project" value="UniProtKB-UniRule"/>
</dbReference>
<dbReference type="GO" id="GO:0070063">
    <property type="term" value="F:RNA polymerase binding"/>
    <property type="evidence" value="ECO:0007669"/>
    <property type="project" value="InterPro"/>
</dbReference>
<dbReference type="GO" id="GO:0006354">
    <property type="term" value="P:DNA-templated transcription elongation"/>
    <property type="evidence" value="ECO:0007669"/>
    <property type="project" value="TreeGrafter"/>
</dbReference>
<dbReference type="GO" id="GO:0032784">
    <property type="term" value="P:regulation of DNA-templated transcription elongation"/>
    <property type="evidence" value="ECO:0007669"/>
    <property type="project" value="UniProtKB-UniRule"/>
</dbReference>
<dbReference type="FunFam" id="1.10.287.180:FF:000001">
    <property type="entry name" value="Transcription elongation factor GreA"/>
    <property type="match status" value="1"/>
</dbReference>
<dbReference type="FunFam" id="3.10.50.30:FF:000001">
    <property type="entry name" value="Transcription elongation factor GreA"/>
    <property type="match status" value="1"/>
</dbReference>
<dbReference type="Gene3D" id="3.10.50.30">
    <property type="entry name" value="Transcription elongation factor, GreA/GreB, C-terminal domain"/>
    <property type="match status" value="1"/>
</dbReference>
<dbReference type="Gene3D" id="1.10.287.180">
    <property type="entry name" value="Transcription elongation factor, GreA/GreB, N-terminal domain"/>
    <property type="match status" value="1"/>
</dbReference>
<dbReference type="HAMAP" id="MF_00105">
    <property type="entry name" value="GreA_GreB"/>
    <property type="match status" value="1"/>
</dbReference>
<dbReference type="InterPro" id="IPR036953">
    <property type="entry name" value="GreA/GreB_C_sf"/>
</dbReference>
<dbReference type="InterPro" id="IPR018151">
    <property type="entry name" value="TF_GreA/GreB_CS"/>
</dbReference>
<dbReference type="InterPro" id="IPR006359">
    <property type="entry name" value="Tscrpt_elong_fac_GreA"/>
</dbReference>
<dbReference type="InterPro" id="IPR028624">
    <property type="entry name" value="Tscrpt_elong_fac_GreA/B"/>
</dbReference>
<dbReference type="InterPro" id="IPR001437">
    <property type="entry name" value="Tscrpt_elong_fac_GreA/B_C"/>
</dbReference>
<dbReference type="InterPro" id="IPR023459">
    <property type="entry name" value="Tscrpt_elong_fac_GreA/B_fam"/>
</dbReference>
<dbReference type="InterPro" id="IPR022691">
    <property type="entry name" value="Tscrpt_elong_fac_GreA/B_N"/>
</dbReference>
<dbReference type="InterPro" id="IPR036805">
    <property type="entry name" value="Tscrpt_elong_fac_GreA/B_N_sf"/>
</dbReference>
<dbReference type="NCBIfam" id="TIGR01462">
    <property type="entry name" value="greA"/>
    <property type="match status" value="1"/>
</dbReference>
<dbReference type="NCBIfam" id="NF001261">
    <property type="entry name" value="PRK00226.1-2"/>
    <property type="match status" value="1"/>
</dbReference>
<dbReference type="NCBIfam" id="NF001263">
    <property type="entry name" value="PRK00226.1-4"/>
    <property type="match status" value="1"/>
</dbReference>
<dbReference type="NCBIfam" id="NF001264">
    <property type="entry name" value="PRK00226.1-5"/>
    <property type="match status" value="1"/>
</dbReference>
<dbReference type="PANTHER" id="PTHR30437">
    <property type="entry name" value="TRANSCRIPTION ELONGATION FACTOR GREA"/>
    <property type="match status" value="1"/>
</dbReference>
<dbReference type="PANTHER" id="PTHR30437:SF4">
    <property type="entry name" value="TRANSCRIPTION ELONGATION FACTOR GREA"/>
    <property type="match status" value="1"/>
</dbReference>
<dbReference type="Pfam" id="PF01272">
    <property type="entry name" value="GreA_GreB"/>
    <property type="match status" value="1"/>
</dbReference>
<dbReference type="Pfam" id="PF03449">
    <property type="entry name" value="GreA_GreB_N"/>
    <property type="match status" value="1"/>
</dbReference>
<dbReference type="PIRSF" id="PIRSF006092">
    <property type="entry name" value="GreA_GreB"/>
    <property type="match status" value="1"/>
</dbReference>
<dbReference type="SUPFAM" id="SSF54534">
    <property type="entry name" value="FKBP-like"/>
    <property type="match status" value="1"/>
</dbReference>
<dbReference type="SUPFAM" id="SSF46557">
    <property type="entry name" value="GreA transcript cleavage protein, N-terminal domain"/>
    <property type="match status" value="1"/>
</dbReference>
<dbReference type="PROSITE" id="PS00829">
    <property type="entry name" value="GREAB_1"/>
    <property type="match status" value="1"/>
</dbReference>
<dbReference type="PROSITE" id="PS00830">
    <property type="entry name" value="GREAB_2"/>
    <property type="match status" value="1"/>
</dbReference>
<reference key="1">
    <citation type="submission" date="2007-07" db="EMBL/GenBank/DDBJ databases">
        <title>Complete genome sequence of Campylobacter jejuni subsp doylei 269.97 isolated from human blood.</title>
        <authorList>
            <person name="Fouts D.E."/>
            <person name="Mongodin E.F."/>
            <person name="Puiu D."/>
            <person name="Sebastian Y."/>
            <person name="Miller W.G."/>
            <person name="Mandrell R.E."/>
            <person name="Lastovica A.J."/>
            <person name="Nelson K.E."/>
        </authorList>
    </citation>
    <scope>NUCLEOTIDE SEQUENCE [LARGE SCALE GENOMIC DNA]</scope>
    <source>
        <strain>ATCC BAA-1458 / RM4099 / 269.97</strain>
    </source>
</reference>
<name>GREA_CAMJD</name>
<organism>
    <name type="scientific">Campylobacter jejuni subsp. doylei (strain ATCC BAA-1458 / RM4099 / 269.97)</name>
    <dbReference type="NCBI Taxonomy" id="360109"/>
    <lineage>
        <taxon>Bacteria</taxon>
        <taxon>Pseudomonadati</taxon>
        <taxon>Campylobacterota</taxon>
        <taxon>Epsilonproteobacteria</taxon>
        <taxon>Campylobacterales</taxon>
        <taxon>Campylobacteraceae</taxon>
        <taxon>Campylobacter</taxon>
    </lineage>
</organism>
<accession>A7H585</accession>
<sequence>MQKEPMSQFGYDKLAAELKDLKDNQRPAVVIEIDTARSHGDLKENAEYHAAREKQALIESRIVELSDLLARAQVIDPSSYEHDSVKFGSSVVIMDLDTEKESKYTLVGICEGDLDKGYISIASPIARAMLGKKEGDDFKVRLPKGESEFEILSINYEPLKF</sequence>
<proteinExistence type="inferred from homology"/>
<keyword id="KW-0238">DNA-binding</keyword>
<keyword id="KW-0804">Transcription</keyword>
<keyword id="KW-0805">Transcription regulation</keyword>
<gene>
    <name evidence="1" type="primary">greA</name>
    <name type="ordered locus">JJD26997_1684</name>
</gene>
<evidence type="ECO:0000255" key="1">
    <source>
        <dbReference type="HAMAP-Rule" id="MF_00105"/>
    </source>
</evidence>
<protein>
    <recommendedName>
        <fullName evidence="1">Transcription elongation factor GreA</fullName>
    </recommendedName>
    <alternativeName>
        <fullName evidence="1">Transcript cleavage factor GreA</fullName>
    </alternativeName>
</protein>
<feature type="chain" id="PRO_1000075869" description="Transcription elongation factor GreA">
    <location>
        <begin position="1"/>
        <end position="161"/>
    </location>
</feature>
<comment type="function">
    <text evidence="1">Necessary for efficient RNA polymerase transcription elongation past template-encoded arresting sites. The arresting sites in DNA have the property of trapping a certain fraction of elongating RNA polymerases that pass through, resulting in locked ternary complexes. Cleavage of the nascent transcript by cleavage factors such as GreA or GreB allows the resumption of elongation from the new 3'terminus. GreA releases sequences of 2 to 3 nucleotides.</text>
</comment>
<comment type="similarity">
    <text evidence="1">Belongs to the GreA/GreB family.</text>
</comment>